<organismHost>
    <name type="scientific">Aves</name>
    <dbReference type="NCBI Taxonomy" id="8782"/>
</organismHost>
<comment type="function">
    <text evidence="1">Plays critical roles in virus replication, from virus entry and uncoating to assembly and budding of the virus particle. M1 binding to ribonucleocapsids (RNPs) in nucleus seems to inhibit viral transcription. Interaction of viral NEP with M1-RNP is thought to promote nuclear export of the complex, which is targeted to the virion assembly site at the apical plasma membrane in polarized epithelial cells. Interactions with NA and HA may bring M1, a non-raft-associated protein, into lipid rafts. Forms a continuous shell on the inner side of the lipid bilayer in virion, where it binds the RNP. During virus entry into cell, the M2 ion channel acidifies the internal virion core, inducing M1 dissociation from the RNP. M1-free RNPs are transported to the nucleus, where viral transcription and replication can take place.</text>
</comment>
<comment type="function">
    <text evidence="1">Determines the virion's shape: spherical or filamentous. Clinical isolates of influenza are characterized by the presence of significant proportion of filamentous virions, whereas after multiple passage on eggs or cell culture, virions have only spherical morphology. Filamentous virions are thought to be important to infect neighboring cells, and spherical virions more suited to spread through aerosol between hosts organisms.</text>
</comment>
<comment type="subunit">
    <text evidence="1">Homodimer and homomultimer. Interacts with NEP. Binds ribonucleocapsid by both interacting with genomic RNA and NP protein. May interact with HA and NA. Cannot bind NP without genomic RNA.</text>
</comment>
<comment type="subcellular location">
    <subcellularLocation>
        <location evidence="1">Virion membrane</location>
        <topology evidence="1">Peripheral membrane protein</topology>
        <orientation evidence="1">Cytoplasmic side</orientation>
    </subcellularLocation>
    <subcellularLocation>
        <location evidence="1">Host nucleus</location>
    </subcellularLocation>
</comment>
<comment type="alternative products">
    <event type="alternative splicing"/>
    <isoform>
        <id>Q0A2G3-1</id>
        <name>M1</name>
        <sequence type="displayed"/>
    </isoform>
    <isoform>
        <id>Q0A2G4-1</id>
        <name>M2</name>
        <sequence type="external"/>
    </isoform>
    <text>Only the first 9 residues are shared by the 2 isoforms.</text>
</comment>
<comment type="miscellaneous">
    <text evidence="1">Most abundant protein in virion. When expressed alone can form virus-like particles in transfected cells.</text>
</comment>
<comment type="similarity">
    <text evidence="1">Belongs to the influenza viruses Matrix protein M1 family.</text>
</comment>
<sequence>MSLLTEVETYVLSIVPSGPLKAEIAQRLEDVFAGKNTDLEALMEWLKTRPILSPLTKGILGFVFTLTVPSERGLQRRRFVQNALNGNGDPNNMDRAVKLYKKLKREITFHGAKEVALSYSTGALASCMGLIYNRMGTVTTEVAFGLVCATCEQIADSQHRSHRQMVTTTNPLIRHENRMVLASTTAKAMEQMAGSSEQAAEAMEVASQARQMVHAMRTIGTHPSSSAGLKDDLLENLQAYQKRMGVQMQRFK</sequence>
<accession>Q0A2G3</accession>
<gene>
    <name evidence="1" type="primary">M</name>
</gene>
<feature type="chain" id="PRO_0000326319" description="Matrix protein 1">
    <location>
        <begin position="1"/>
        <end position="252"/>
    </location>
</feature>
<feature type="region of interest" description="Membrane-binding" evidence="1">
    <location>
        <begin position="1"/>
        <end position="164"/>
    </location>
</feature>
<feature type="region of interest" description="RNP-binding" evidence="1">
    <location>
        <begin position="165"/>
        <end position="252"/>
    </location>
</feature>
<feature type="short sequence motif" description="Nuclear localization signal" evidence="1">
    <location>
        <begin position="101"/>
        <end position="105"/>
    </location>
</feature>
<name>M1_I83A4</name>
<keyword id="KW-0025">Alternative splicing</keyword>
<keyword id="KW-1048">Host nucleus</keyword>
<keyword id="KW-0472">Membrane</keyword>
<keyword id="KW-0694">RNA-binding</keyword>
<keyword id="KW-0468">Viral matrix protein</keyword>
<keyword id="KW-0946">Virion</keyword>
<organism>
    <name type="scientific">Influenza A virus (strain A/Turkey/Ireland/1378/1983 H5N8)</name>
    <dbReference type="NCBI Taxonomy" id="380285"/>
    <lineage>
        <taxon>Viruses</taxon>
        <taxon>Riboviria</taxon>
        <taxon>Orthornavirae</taxon>
        <taxon>Negarnaviricota</taxon>
        <taxon>Polyploviricotina</taxon>
        <taxon>Insthoviricetes</taxon>
        <taxon>Articulavirales</taxon>
        <taxon>Orthomyxoviridae</taxon>
        <taxon>Alphainfluenzavirus</taxon>
        <taxon>Alphainfluenzavirus influenzae</taxon>
        <taxon>Influenza A virus</taxon>
    </lineage>
</organism>
<dbReference type="EMBL" id="CY015090">
    <property type="protein sequence ID" value="ABI85118.1"/>
    <property type="molecule type" value="Genomic_RNA"/>
</dbReference>
<dbReference type="SMR" id="Q0A2G3"/>
<dbReference type="Proteomes" id="UP000008583">
    <property type="component" value="Genome"/>
</dbReference>
<dbReference type="GO" id="GO:0042025">
    <property type="term" value="C:host cell nucleus"/>
    <property type="evidence" value="ECO:0007669"/>
    <property type="project" value="UniProtKB-SubCell"/>
</dbReference>
<dbReference type="GO" id="GO:0016020">
    <property type="term" value="C:membrane"/>
    <property type="evidence" value="ECO:0007669"/>
    <property type="project" value="UniProtKB-KW"/>
</dbReference>
<dbReference type="GO" id="GO:0055036">
    <property type="term" value="C:virion membrane"/>
    <property type="evidence" value="ECO:0007669"/>
    <property type="project" value="UniProtKB-SubCell"/>
</dbReference>
<dbReference type="GO" id="GO:0003723">
    <property type="term" value="F:RNA binding"/>
    <property type="evidence" value="ECO:0007669"/>
    <property type="project" value="UniProtKB-UniRule"/>
</dbReference>
<dbReference type="GO" id="GO:0039660">
    <property type="term" value="F:structural constituent of virion"/>
    <property type="evidence" value="ECO:0007669"/>
    <property type="project" value="UniProtKB-UniRule"/>
</dbReference>
<dbReference type="GO" id="GO:0046761">
    <property type="term" value="P:viral budding from plasma membrane"/>
    <property type="evidence" value="ECO:0007669"/>
    <property type="project" value="UniProtKB-UniRule"/>
</dbReference>
<dbReference type="FunFam" id="1.10.10.180:FF:000001">
    <property type="entry name" value="Matrix protein 1"/>
    <property type="match status" value="1"/>
</dbReference>
<dbReference type="FunFam" id="1.20.91.10:FF:000001">
    <property type="entry name" value="Matrix protein 1"/>
    <property type="match status" value="1"/>
</dbReference>
<dbReference type="Gene3D" id="1.10.10.180">
    <property type="match status" value="1"/>
</dbReference>
<dbReference type="Gene3D" id="1.20.91.10">
    <property type="match status" value="1"/>
</dbReference>
<dbReference type="HAMAP" id="MF_04068">
    <property type="entry name" value="INFV_M1"/>
    <property type="match status" value="1"/>
</dbReference>
<dbReference type="InterPro" id="IPR036039">
    <property type="entry name" value="Flu_matrix_M1"/>
</dbReference>
<dbReference type="InterPro" id="IPR013188">
    <property type="entry name" value="Flu_matrix_M1_C"/>
</dbReference>
<dbReference type="InterPro" id="IPR001561">
    <property type="entry name" value="Flu_matrix_M1_N"/>
</dbReference>
<dbReference type="InterPro" id="IPR015423">
    <property type="entry name" value="Flu_matrix_M1_N_sub1"/>
</dbReference>
<dbReference type="InterPro" id="IPR015799">
    <property type="entry name" value="Flu_matrix_M1_N_sub2"/>
</dbReference>
<dbReference type="InterPro" id="IPR037533">
    <property type="entry name" value="INFV_M1"/>
</dbReference>
<dbReference type="Pfam" id="PF00598">
    <property type="entry name" value="Flu_M1"/>
    <property type="match status" value="1"/>
</dbReference>
<dbReference type="Pfam" id="PF08289">
    <property type="entry name" value="Flu_M1_C"/>
    <property type="match status" value="1"/>
</dbReference>
<dbReference type="SMART" id="SM00759">
    <property type="entry name" value="Flu_M1_C"/>
    <property type="match status" value="1"/>
</dbReference>
<dbReference type="SUPFAM" id="SSF48145">
    <property type="entry name" value="Influenza virus matrix protein M1"/>
    <property type="match status" value="1"/>
</dbReference>
<reference key="1">
    <citation type="journal article" date="2006" name="Science">
        <title>Large-scale sequence analysis of avian influenza isolates.</title>
        <authorList>
            <person name="Obenauer J.C."/>
            <person name="Denson J."/>
            <person name="Mehta P.K."/>
            <person name="Su X."/>
            <person name="Mukatira S."/>
            <person name="Finkelstein D.B."/>
            <person name="Xu X."/>
            <person name="Wang J."/>
            <person name="Ma J."/>
            <person name="Fan Y."/>
            <person name="Rakestraw K.M."/>
            <person name="Webster R.G."/>
            <person name="Hoffmann E."/>
            <person name="Krauss S."/>
            <person name="Zheng J."/>
            <person name="Zhang Z."/>
            <person name="Naeve C.W."/>
        </authorList>
    </citation>
    <scope>NUCLEOTIDE SEQUENCE [GENOMIC RNA]</scope>
</reference>
<protein>
    <recommendedName>
        <fullName evidence="1">Matrix protein 1</fullName>
        <shortName evidence="1">M1</shortName>
    </recommendedName>
</protein>
<evidence type="ECO:0000255" key="1">
    <source>
        <dbReference type="HAMAP-Rule" id="MF_04068"/>
    </source>
</evidence>
<proteinExistence type="inferred from homology"/>